<sequence length="869" mass="96826">MSGRDNRGAGGGGGGHQPLSSAMGKLKEKLTRAGDDQGYHRVESNLSTSNTATSLDTILPEDPFLFPQAAPQRHPLPRPQQQQQQQQRQQLRLLEDEPPLSFRPLLEDDDINEPPTQPFQQQQQRTPLRASGSLELTPLPPPPTSQEIREHRDRQQRSVPVPVEDLQRSKQSLKGSRVSFEKNNASSKPPAQAESSDEDSFEDKRIGFQQQKATSVDHKGILKDLKHILANDNRRQFQAKKHVSLDVKGTRFLQDLLKESSSEEEFHKTRREFQGRKHQSLDPRVTFKLDKVLQGSSTDSDEEGDDPEHKRLIHRPKDITKPLIIDLKDLESESDEDFHTSRQHFQQQRSISTDSRKSRRPYEMDEMGNKRGENIRHAVPFVRQITEDGKPKLEVYRPTTNPIYIWTQVLAALSVSLGSLVVGFVSAYTSPALVSMTNRNMTSFEVTPQAASWVGGIMPLAGLAGGIAGGPFIEYLGRRNTILATAIPFIVSSLLIACAVNVAMVLAGRFLAGFCVGIASLSLPVYLGETVQPEVRGTLGLLPTAFGNIGILLCFVAGTYMDWSMLAFLGAALPVPFLILMFLIPETPRWFVSRGREEKARKALSWLRGKEADVEPELKGLMRSQADADRQATQNKMMELLKRNNLKPLSISLGLMFFQQLSGINAVIFYTVSIFKDAGSTIDGNLCTIIVGIVNFMATFIATLLIDRAGRKILLYVSNIAMIITLFVLGGFFYCKSHGQDVSQLGWLPLSCFVIYILGFSLGFGPIPWLMMGEILPSKIRGSAASVATAFNWSCTFVVTKTFQDMIDFMGAHGAFWLFGSICFIGLFFVILYVPETQGKTLEDIERKMMGRVRRMSSVANMKPLAFNM</sequence>
<accession>B4GAP7</accession>
<name>TRET1_DROPE</name>
<evidence type="ECO:0000250" key="1">
    <source>
        <dbReference type="UniProtKB" id="A1Z8N1"/>
    </source>
</evidence>
<evidence type="ECO:0000255" key="2"/>
<evidence type="ECO:0000256" key="3">
    <source>
        <dbReference type="SAM" id="MobiDB-lite"/>
    </source>
</evidence>
<evidence type="ECO:0000305" key="4"/>
<evidence type="ECO:0000312" key="5">
    <source>
        <dbReference type="EMBL" id="EDW31999.1"/>
    </source>
</evidence>
<reference evidence="5" key="1">
    <citation type="journal article" date="2007" name="Nature">
        <title>Evolution of genes and genomes on the Drosophila phylogeny.</title>
        <authorList>
            <consortium name="Drosophila 12 genomes consortium"/>
        </authorList>
    </citation>
    <scope>NUCLEOTIDE SEQUENCE [LARGE SCALE GENOMIC DNA]</scope>
    <source>
        <strain evidence="5">MSH-3 / Tucson 14011-0111.49</strain>
    </source>
</reference>
<feature type="chain" id="PRO_0000395546" description="Facilitated trehalose transporter Tret1">
    <location>
        <begin position="1"/>
        <end position="869"/>
    </location>
</feature>
<feature type="topological domain" description="Cytoplasmic" evidence="2">
    <location>
        <begin position="1"/>
        <end position="404"/>
    </location>
</feature>
<feature type="transmembrane region" description="Helical; Name=1" evidence="2">
    <location>
        <begin position="405"/>
        <end position="425"/>
    </location>
</feature>
<feature type="topological domain" description="Extracellular" evidence="2">
    <location>
        <begin position="426"/>
        <end position="452"/>
    </location>
</feature>
<feature type="transmembrane region" description="Helical; Name=2" evidence="2">
    <location>
        <begin position="453"/>
        <end position="473"/>
    </location>
</feature>
<feature type="topological domain" description="Cytoplasmic" evidence="2">
    <location>
        <begin position="474"/>
        <end position="485"/>
    </location>
</feature>
<feature type="transmembrane region" description="Helical; Name=3" evidence="2">
    <location>
        <begin position="486"/>
        <end position="506"/>
    </location>
</feature>
<feature type="topological domain" description="Extracellular" evidence="2">
    <location>
        <begin position="507"/>
        <end position="509"/>
    </location>
</feature>
<feature type="transmembrane region" description="Helical; Name=4" evidence="2">
    <location>
        <begin position="510"/>
        <end position="530"/>
    </location>
</feature>
<feature type="topological domain" description="Cytoplasmic" evidence="2">
    <location>
        <begin position="531"/>
        <end position="536"/>
    </location>
</feature>
<feature type="transmembrane region" description="Helical; Name=5" evidence="2">
    <location>
        <begin position="537"/>
        <end position="557"/>
    </location>
</feature>
<feature type="topological domain" description="Extracellular" evidence="2">
    <location>
        <begin position="558"/>
        <end position="564"/>
    </location>
</feature>
<feature type="transmembrane region" description="Helical; Name=6" evidence="2">
    <location>
        <begin position="565"/>
        <end position="585"/>
    </location>
</feature>
<feature type="topological domain" description="Cytoplasmic" evidence="2">
    <location>
        <begin position="586"/>
        <end position="654"/>
    </location>
</feature>
<feature type="transmembrane region" description="Helical; Name=7" evidence="2">
    <location>
        <begin position="655"/>
        <end position="675"/>
    </location>
</feature>
<feature type="topological domain" description="Extracellular" evidence="2">
    <location>
        <begin position="676"/>
        <end position="685"/>
    </location>
</feature>
<feature type="transmembrane region" description="Helical; Name=8" evidence="2">
    <location>
        <begin position="686"/>
        <end position="706"/>
    </location>
</feature>
<feature type="topological domain" description="Cytoplasmic" evidence="2">
    <location>
        <begin position="707"/>
        <end position="712"/>
    </location>
</feature>
<feature type="transmembrane region" description="Helical; Name=9" evidence="2">
    <location>
        <begin position="713"/>
        <end position="733"/>
    </location>
</feature>
<feature type="topological domain" description="Extracellular" evidence="2">
    <location>
        <begin position="734"/>
        <end position="752"/>
    </location>
</feature>
<feature type="transmembrane region" description="Helical; Name=10" evidence="2">
    <location>
        <begin position="753"/>
        <end position="773"/>
    </location>
</feature>
<feature type="topological domain" description="Cytoplasmic" evidence="2">
    <location>
        <begin position="774"/>
        <end position="779"/>
    </location>
</feature>
<feature type="transmembrane region" description="Helical; Name=11" evidence="2">
    <location>
        <begin position="780"/>
        <end position="800"/>
    </location>
</feature>
<feature type="topological domain" description="Extracellular" evidence="2">
    <location>
        <begin position="801"/>
        <end position="813"/>
    </location>
</feature>
<feature type="transmembrane region" description="Helical; Name=12" evidence="2">
    <location>
        <begin position="814"/>
        <end position="834"/>
    </location>
</feature>
<feature type="topological domain" description="Cytoplasmic" evidence="2">
    <location>
        <begin position="835"/>
        <end position="869"/>
    </location>
</feature>
<feature type="region of interest" description="Disordered" evidence="3">
    <location>
        <begin position="1"/>
        <end position="214"/>
    </location>
</feature>
<feature type="region of interest" description="Disordered" evidence="3">
    <location>
        <begin position="258"/>
        <end position="315"/>
    </location>
</feature>
<feature type="region of interest" description="Disordered" evidence="3">
    <location>
        <begin position="336"/>
        <end position="368"/>
    </location>
</feature>
<feature type="compositionally biased region" description="Basic and acidic residues" evidence="3">
    <location>
        <begin position="25"/>
        <end position="43"/>
    </location>
</feature>
<feature type="compositionally biased region" description="Low complexity" evidence="3">
    <location>
        <begin position="44"/>
        <end position="57"/>
    </location>
</feature>
<feature type="compositionally biased region" description="Low complexity" evidence="3">
    <location>
        <begin position="79"/>
        <end position="92"/>
    </location>
</feature>
<feature type="compositionally biased region" description="Low complexity" evidence="3">
    <location>
        <begin position="118"/>
        <end position="127"/>
    </location>
</feature>
<feature type="compositionally biased region" description="Basic and acidic residues" evidence="3">
    <location>
        <begin position="147"/>
        <end position="156"/>
    </location>
</feature>
<feature type="compositionally biased region" description="Basic and acidic residues" evidence="3">
    <location>
        <begin position="258"/>
        <end position="291"/>
    </location>
</feature>
<feature type="compositionally biased region" description="Polar residues" evidence="3">
    <location>
        <begin position="343"/>
        <end position="353"/>
    </location>
</feature>
<feature type="compositionally biased region" description="Basic and acidic residues" evidence="3">
    <location>
        <begin position="354"/>
        <end position="368"/>
    </location>
</feature>
<feature type="modified residue" description="Phosphoserine" evidence="1">
    <location>
        <position position="260"/>
    </location>
</feature>
<feature type="modified residue" description="Phosphoserine" evidence="1">
    <location>
        <position position="261"/>
    </location>
</feature>
<feature type="modified residue" description="Phosphoserine" evidence="1">
    <location>
        <position position="262"/>
    </location>
</feature>
<feature type="modified residue" description="Phosphoserine" evidence="1">
    <location>
        <position position="332"/>
    </location>
</feature>
<feature type="modified residue" description="Phosphoserine" evidence="1">
    <location>
        <position position="334"/>
    </location>
</feature>
<feature type="modified residue" description="Phosphoserine" evidence="1">
    <location>
        <position position="857"/>
    </location>
</feature>
<feature type="modified residue" description="Phosphoserine" evidence="1">
    <location>
        <position position="858"/>
    </location>
</feature>
<feature type="glycosylation site" description="N-linked (GlcNAc...) asparagine" evidence="2">
    <location>
        <position position="440"/>
    </location>
</feature>
<gene>
    <name evidence="1" type="primary">Tret1</name>
    <name type="ORF">GL11419</name>
</gene>
<organism>
    <name type="scientific">Drosophila persimilis</name>
    <name type="common">Fruit fly</name>
    <dbReference type="NCBI Taxonomy" id="7234"/>
    <lineage>
        <taxon>Eukaryota</taxon>
        <taxon>Metazoa</taxon>
        <taxon>Ecdysozoa</taxon>
        <taxon>Arthropoda</taxon>
        <taxon>Hexapoda</taxon>
        <taxon>Insecta</taxon>
        <taxon>Pterygota</taxon>
        <taxon>Neoptera</taxon>
        <taxon>Endopterygota</taxon>
        <taxon>Diptera</taxon>
        <taxon>Brachycera</taxon>
        <taxon>Muscomorpha</taxon>
        <taxon>Ephydroidea</taxon>
        <taxon>Drosophilidae</taxon>
        <taxon>Drosophila</taxon>
        <taxon>Sophophora</taxon>
    </lineage>
</organism>
<dbReference type="EMBL" id="CH479181">
    <property type="protein sequence ID" value="EDW31999.1"/>
    <property type="status" value="ALT_SEQ"/>
    <property type="molecule type" value="Genomic_DNA"/>
</dbReference>
<dbReference type="RefSeq" id="XP_002016109.1">
    <property type="nucleotide sequence ID" value="XM_002016073.1"/>
</dbReference>
<dbReference type="SMR" id="B4GAP7"/>
<dbReference type="STRING" id="7234.B4GAP7"/>
<dbReference type="GlyCosmos" id="B4GAP7">
    <property type="glycosylation" value="1 site, No reported glycans"/>
</dbReference>
<dbReference type="EnsemblMetazoa" id="XM_026986695.1">
    <property type="protein sequence ID" value="XP_026842496.1"/>
    <property type="gene ID" value="LOC6590176"/>
</dbReference>
<dbReference type="eggNOG" id="KOG0254">
    <property type="taxonomic scope" value="Eukaryota"/>
</dbReference>
<dbReference type="OrthoDB" id="6339427at2759"/>
<dbReference type="Proteomes" id="UP000008744">
    <property type="component" value="Unassembled WGS sequence"/>
</dbReference>
<dbReference type="GO" id="GO:0005886">
    <property type="term" value="C:plasma membrane"/>
    <property type="evidence" value="ECO:0000250"/>
    <property type="project" value="UniProtKB"/>
</dbReference>
<dbReference type="GO" id="GO:0051119">
    <property type="term" value="F:sugar transmembrane transporter activity"/>
    <property type="evidence" value="ECO:0007669"/>
    <property type="project" value="InterPro"/>
</dbReference>
<dbReference type="GO" id="GO:0015574">
    <property type="term" value="F:trehalose transmembrane transporter activity"/>
    <property type="evidence" value="ECO:0000250"/>
    <property type="project" value="UniProtKB"/>
</dbReference>
<dbReference type="GO" id="GO:0015771">
    <property type="term" value="P:trehalose transport"/>
    <property type="evidence" value="ECO:0000250"/>
    <property type="project" value="UniProtKB"/>
</dbReference>
<dbReference type="CDD" id="cd17358">
    <property type="entry name" value="MFS_GLUT6_8_Class3_like"/>
    <property type="match status" value="1"/>
</dbReference>
<dbReference type="FunFam" id="1.20.1250.20:FF:000055">
    <property type="entry name" value="Facilitated trehalose transporter Tret1-2 homolog"/>
    <property type="match status" value="1"/>
</dbReference>
<dbReference type="Gene3D" id="1.20.1250.20">
    <property type="entry name" value="MFS general substrate transporter like domains"/>
    <property type="match status" value="1"/>
</dbReference>
<dbReference type="InterPro" id="IPR020846">
    <property type="entry name" value="MFS_dom"/>
</dbReference>
<dbReference type="InterPro" id="IPR044775">
    <property type="entry name" value="MFS_ERD6/Tret1-like"/>
</dbReference>
<dbReference type="InterPro" id="IPR005828">
    <property type="entry name" value="MFS_sugar_transport-like"/>
</dbReference>
<dbReference type="InterPro" id="IPR036259">
    <property type="entry name" value="MFS_trans_sf"/>
</dbReference>
<dbReference type="InterPro" id="IPR050549">
    <property type="entry name" value="MFS_Trehalose_Transporter"/>
</dbReference>
<dbReference type="InterPro" id="IPR003663">
    <property type="entry name" value="Sugar/inositol_transpt"/>
</dbReference>
<dbReference type="InterPro" id="IPR005829">
    <property type="entry name" value="Sugar_transporter_CS"/>
</dbReference>
<dbReference type="NCBIfam" id="TIGR00879">
    <property type="entry name" value="SP"/>
    <property type="match status" value="1"/>
</dbReference>
<dbReference type="PANTHER" id="PTHR48021">
    <property type="match status" value="1"/>
</dbReference>
<dbReference type="PANTHER" id="PTHR48021:SF96">
    <property type="entry name" value="FACILITATED TREHALOSE TRANSPORTER TRET1-1-RELATED"/>
    <property type="match status" value="1"/>
</dbReference>
<dbReference type="Pfam" id="PF00083">
    <property type="entry name" value="Sugar_tr"/>
    <property type="match status" value="1"/>
</dbReference>
<dbReference type="PRINTS" id="PR00171">
    <property type="entry name" value="SUGRTRNSPORT"/>
</dbReference>
<dbReference type="SUPFAM" id="SSF103473">
    <property type="entry name" value="MFS general substrate transporter"/>
    <property type="match status" value="1"/>
</dbReference>
<dbReference type="PROSITE" id="PS50850">
    <property type="entry name" value="MFS"/>
    <property type="match status" value="1"/>
</dbReference>
<dbReference type="PROSITE" id="PS00216">
    <property type="entry name" value="SUGAR_TRANSPORT_1"/>
    <property type="match status" value="1"/>
</dbReference>
<dbReference type="PROSITE" id="PS00217">
    <property type="entry name" value="SUGAR_TRANSPORT_2"/>
    <property type="match status" value="1"/>
</dbReference>
<proteinExistence type="inferred from homology"/>
<comment type="function">
    <text evidence="1">Low-capacity facilitative transporter for trehalose. Does not transport maltose, sucrose or lactose. Mediates the bidirectional transfer of trehalose. Responsible for the transport of trehalose synthesized in the fat body and the incorporation of trehalose into other tissues that require a carbon source, thereby regulating trehalose levels in the hemolymph (By similarity).</text>
</comment>
<comment type="subcellular location">
    <subcellularLocation>
        <location evidence="1">Cell membrane</location>
        <topology evidence="1">Multi-pass membrane protein</topology>
    </subcellularLocation>
</comment>
<comment type="similarity">
    <text evidence="1 2">Belongs to the major facilitator superfamily. Sugar transporter (TC 2.A.1.1) family. Trehalose transporter subfamily.</text>
</comment>
<comment type="sequence caution" evidence="4">
    <conflict type="erroneous gene model prediction">
        <sequence resource="EMBL-CDS" id="EDW31999"/>
    </conflict>
</comment>
<keyword id="KW-1003">Cell membrane</keyword>
<keyword id="KW-0325">Glycoprotein</keyword>
<keyword id="KW-0472">Membrane</keyword>
<keyword id="KW-0597">Phosphoprotein</keyword>
<keyword id="KW-1185">Reference proteome</keyword>
<keyword id="KW-0762">Sugar transport</keyword>
<keyword id="KW-0812">Transmembrane</keyword>
<keyword id="KW-1133">Transmembrane helix</keyword>
<keyword id="KW-0813">Transport</keyword>
<protein>
    <recommendedName>
        <fullName evidence="1">Facilitated trehalose transporter Tret1</fullName>
    </recommendedName>
</protein>